<organism>
    <name type="scientific">Homo sapiens</name>
    <name type="common">Human</name>
    <dbReference type="NCBI Taxonomy" id="9606"/>
    <lineage>
        <taxon>Eukaryota</taxon>
        <taxon>Metazoa</taxon>
        <taxon>Chordata</taxon>
        <taxon>Craniata</taxon>
        <taxon>Vertebrata</taxon>
        <taxon>Euteleostomi</taxon>
        <taxon>Mammalia</taxon>
        <taxon>Eutheria</taxon>
        <taxon>Euarchontoglires</taxon>
        <taxon>Primates</taxon>
        <taxon>Haplorrhini</taxon>
        <taxon>Catarrhini</taxon>
        <taxon>Hominidae</taxon>
        <taxon>Homo</taxon>
    </lineage>
</organism>
<keyword id="KW-1003">Cell membrane</keyword>
<keyword id="KW-0966">Cell projection</keyword>
<keyword id="KW-0968">Cytoplasmic vesicle</keyword>
<keyword id="KW-0254">Endocytosis</keyword>
<keyword id="KW-0967">Endosome</keyword>
<keyword id="KW-0342">GTP-binding</keyword>
<keyword id="KW-0449">Lipoprotein</keyword>
<keyword id="KW-0472">Membrane</keyword>
<keyword id="KW-0547">Nucleotide-binding</keyword>
<keyword id="KW-0636">Prenylation</keyword>
<keyword id="KW-0653">Protein transport</keyword>
<keyword id="KW-1267">Proteomics identification</keyword>
<keyword id="KW-1185">Reference proteome</keyword>
<keyword id="KW-0813">Transport</keyword>
<proteinExistence type="evidence at protein level"/>
<sequence length="194" mass="21855">MALRELKVCLLGDTGVGKSSIVWRFVEDSFDPNINPTIGASFMTKTVQYQNELHKFLIWDTAGQERFRALAPMYYRGSAAAIIVYDITKEETFSTLKNWVKELRQHGPPNIVVAIAGNKCDLIDVREVMERDAKDYADSIHAIFVETSAKNAININELFIEISRRIPSTDANLPSGGKGFKLRRQPSEPKRSCC</sequence>
<comment type="function">
    <text evidence="5 8">Plays a role in endocytosis and intracellular protein transport. Mediates trafficking of TF from early endosomes to recycling endosomes (PubMed:16537905). Required for NGF-mediated endocytosis of NTRK1, and subsequent neurite outgrowth (PubMed:21849477). Binds GTP and GDP and has low GTPase activity. Alternates between a GTP-bound active form and a GDP-bound inactive form (PubMed:16537905).</text>
</comment>
<comment type="subunit">
    <text evidence="2 3 7 8">Interacts directly with ZFYVE20 (By similarity). Binds EEA1 (By similarity). Interacts (in its GTP-bound form) with RABGEF1 (PubMed:21849477). Interacts (in its GTP-bound form) with RINL (PubMed:21419809).</text>
</comment>
<comment type="interaction">
    <interactant intactId="EBI-399456">
        <id>Q9UL26</id>
    </interactant>
    <interactant intactId="EBI-12078276">
        <id>Q60I27</id>
        <label>ALS2CL</label>
    </interactant>
    <organismsDiffer>false</organismsDiffer>
    <experiments>3</experiments>
</comment>
<comment type="interaction">
    <interactant intactId="EBI-399456">
        <id>Q9UL26</id>
    </interactant>
    <interactant intactId="EBI-741261">
        <id>Q8NEU8</id>
        <label>APPL2</label>
    </interactant>
    <organismsDiffer>false</organismsDiffer>
    <experiments>8</experiments>
</comment>
<comment type="interaction">
    <interactant intactId="EBI-399456">
        <id>Q9UL26</id>
    </interactant>
    <interactant intactId="EBI-298113">
        <id>Q15075</id>
        <label>EEA1</label>
    </interactant>
    <organismsDiffer>false</organismsDiffer>
    <experiments>3</experiments>
</comment>
<comment type="subcellular location">
    <subcellularLocation>
        <location evidence="3">Endosome membrane</location>
        <topology evidence="9">Lipid-anchor</topology>
    </subcellularLocation>
    <subcellularLocation>
        <location evidence="3">Cell membrane</location>
        <topology evidence="9">Lipid-anchor</topology>
    </subcellularLocation>
    <subcellularLocation>
        <location evidence="5">Early endosome</location>
    </subcellularLocation>
    <subcellularLocation>
        <location evidence="3">Late endosome</location>
    </subcellularLocation>
    <subcellularLocation>
        <location evidence="7">Cell projection</location>
        <location evidence="7">Ruffle</location>
    </subcellularLocation>
    <subcellularLocation>
        <location evidence="7">Cytoplasmic vesicle</location>
    </subcellularLocation>
    <subcellularLocation>
        <location evidence="6">Cytoplasmic vesicle</location>
        <location evidence="6">Phagosome</location>
    </subcellularLocation>
    <subcellularLocation>
        <location evidence="9">Cytoplasmic vesicle</location>
        <location evidence="9">Phagosome membrane</location>
        <topology evidence="9">Lipid-anchor</topology>
        <orientation evidence="9">Cytoplasmic side</orientation>
    </subcellularLocation>
    <text evidence="6">Recruited to phagosomes containing S.aureus or M.tuberculosis.</text>
</comment>
<comment type="similarity">
    <text evidence="9">Belongs to the small GTPase superfamily. Rab family.</text>
</comment>
<protein>
    <recommendedName>
        <fullName>Ras-related protein Rab-22A</fullName>
        <shortName>Rab-22</shortName>
    </recommendedName>
</protein>
<evidence type="ECO:0000250" key="1"/>
<evidence type="ECO:0000250" key="2">
    <source>
        <dbReference type="UniProtKB" id="P35285"/>
    </source>
</evidence>
<evidence type="ECO:0000250" key="3">
    <source>
        <dbReference type="UniProtKB" id="P51154"/>
    </source>
</evidence>
<evidence type="ECO:0000256" key="4">
    <source>
        <dbReference type="SAM" id="MobiDB-lite"/>
    </source>
</evidence>
<evidence type="ECO:0000269" key="5">
    <source>
    </source>
</evidence>
<evidence type="ECO:0000269" key="6">
    <source>
    </source>
</evidence>
<evidence type="ECO:0000269" key="7">
    <source>
    </source>
</evidence>
<evidence type="ECO:0000269" key="8">
    <source>
    </source>
</evidence>
<evidence type="ECO:0000305" key="9"/>
<reference key="1">
    <citation type="submission" date="1999-02" db="EMBL/GenBank/DDBJ databases">
        <title>Cloning of a novel human cDNA similar to Canis familiaris mRNA for Rab22 protein.</title>
        <authorList>
            <person name="Ding J.B."/>
            <person name="Yu L."/>
            <person name="Zhao S.Y."/>
        </authorList>
    </citation>
    <scope>NUCLEOTIDE SEQUENCE [MRNA]</scope>
</reference>
<reference key="2">
    <citation type="journal article" date="2000" name="Eur. J. Cell Biol.">
        <title>Expression of Rab small GTPases in epithelial Caco-2 cells: Rab21 is an apically located GTP-binding protein in polarised intestinal epithelial cells.</title>
        <authorList>
            <person name="Opdam F.J.M."/>
            <person name="Kamps G."/>
            <person name="Croes H."/>
            <person name="van Bokhoven H."/>
            <person name="Ginsel L.A."/>
            <person name="Fransen J.A.M."/>
        </authorList>
    </citation>
    <scope>NUCLEOTIDE SEQUENCE [MRNA]</scope>
    <source>
        <tissue>Colon carcinoma</tissue>
    </source>
</reference>
<reference key="3">
    <citation type="submission" date="2000-07" db="EMBL/GenBank/DDBJ databases">
        <title>Mapping and characterization of the human RAB22A gene.</title>
        <authorList>
            <person name="Kussmann S."/>
            <person name="Hansmann I."/>
            <person name="Schlote D."/>
        </authorList>
    </citation>
    <scope>NUCLEOTIDE SEQUENCE [MRNA]</scope>
</reference>
<reference key="4">
    <citation type="submission" date="2003-05" db="EMBL/GenBank/DDBJ databases">
        <title>Cloning of human full-length CDSs in BD Creator(TM) system donor vector.</title>
        <authorList>
            <person name="Kalnine N."/>
            <person name="Chen X."/>
            <person name="Rolfs A."/>
            <person name="Halleck A."/>
            <person name="Hines L."/>
            <person name="Eisenstein S."/>
            <person name="Koundinya M."/>
            <person name="Raphael J."/>
            <person name="Moreira D."/>
            <person name="Kelley T."/>
            <person name="LaBaer J."/>
            <person name="Lin Y."/>
            <person name="Phelan M."/>
            <person name="Farmer A."/>
        </authorList>
    </citation>
    <scope>NUCLEOTIDE SEQUENCE [LARGE SCALE MRNA]</scope>
</reference>
<reference key="5">
    <citation type="journal article" date="2004" name="Nat. Genet.">
        <title>Complete sequencing and characterization of 21,243 full-length human cDNAs.</title>
        <authorList>
            <person name="Ota T."/>
            <person name="Suzuki Y."/>
            <person name="Nishikawa T."/>
            <person name="Otsuki T."/>
            <person name="Sugiyama T."/>
            <person name="Irie R."/>
            <person name="Wakamatsu A."/>
            <person name="Hayashi K."/>
            <person name="Sato H."/>
            <person name="Nagai K."/>
            <person name="Kimura K."/>
            <person name="Makita H."/>
            <person name="Sekine M."/>
            <person name="Obayashi M."/>
            <person name="Nishi T."/>
            <person name="Shibahara T."/>
            <person name="Tanaka T."/>
            <person name="Ishii S."/>
            <person name="Yamamoto J."/>
            <person name="Saito K."/>
            <person name="Kawai Y."/>
            <person name="Isono Y."/>
            <person name="Nakamura Y."/>
            <person name="Nagahari K."/>
            <person name="Murakami K."/>
            <person name="Yasuda T."/>
            <person name="Iwayanagi T."/>
            <person name="Wagatsuma M."/>
            <person name="Shiratori A."/>
            <person name="Sudo H."/>
            <person name="Hosoiri T."/>
            <person name="Kaku Y."/>
            <person name="Kodaira H."/>
            <person name="Kondo H."/>
            <person name="Sugawara M."/>
            <person name="Takahashi M."/>
            <person name="Kanda K."/>
            <person name="Yokoi T."/>
            <person name="Furuya T."/>
            <person name="Kikkawa E."/>
            <person name="Omura Y."/>
            <person name="Abe K."/>
            <person name="Kamihara K."/>
            <person name="Katsuta N."/>
            <person name="Sato K."/>
            <person name="Tanikawa M."/>
            <person name="Yamazaki M."/>
            <person name="Ninomiya K."/>
            <person name="Ishibashi T."/>
            <person name="Yamashita H."/>
            <person name="Murakawa K."/>
            <person name="Fujimori K."/>
            <person name="Tanai H."/>
            <person name="Kimata M."/>
            <person name="Watanabe M."/>
            <person name="Hiraoka S."/>
            <person name="Chiba Y."/>
            <person name="Ishida S."/>
            <person name="Ono Y."/>
            <person name="Takiguchi S."/>
            <person name="Watanabe S."/>
            <person name="Yosida M."/>
            <person name="Hotuta T."/>
            <person name="Kusano J."/>
            <person name="Kanehori K."/>
            <person name="Takahashi-Fujii A."/>
            <person name="Hara H."/>
            <person name="Tanase T.-O."/>
            <person name="Nomura Y."/>
            <person name="Togiya S."/>
            <person name="Komai F."/>
            <person name="Hara R."/>
            <person name="Takeuchi K."/>
            <person name="Arita M."/>
            <person name="Imose N."/>
            <person name="Musashino K."/>
            <person name="Yuuki H."/>
            <person name="Oshima A."/>
            <person name="Sasaki N."/>
            <person name="Aotsuka S."/>
            <person name="Yoshikawa Y."/>
            <person name="Matsunawa H."/>
            <person name="Ichihara T."/>
            <person name="Shiohata N."/>
            <person name="Sano S."/>
            <person name="Moriya S."/>
            <person name="Momiyama H."/>
            <person name="Satoh N."/>
            <person name="Takami S."/>
            <person name="Terashima Y."/>
            <person name="Suzuki O."/>
            <person name="Nakagawa S."/>
            <person name="Senoh A."/>
            <person name="Mizoguchi H."/>
            <person name="Goto Y."/>
            <person name="Shimizu F."/>
            <person name="Wakebe H."/>
            <person name="Hishigaki H."/>
            <person name="Watanabe T."/>
            <person name="Sugiyama A."/>
            <person name="Takemoto M."/>
            <person name="Kawakami B."/>
            <person name="Yamazaki M."/>
            <person name="Watanabe K."/>
            <person name="Kumagai A."/>
            <person name="Itakura S."/>
            <person name="Fukuzumi Y."/>
            <person name="Fujimori Y."/>
            <person name="Komiyama M."/>
            <person name="Tashiro H."/>
            <person name="Tanigami A."/>
            <person name="Fujiwara T."/>
            <person name="Ono T."/>
            <person name="Yamada K."/>
            <person name="Fujii Y."/>
            <person name="Ozaki K."/>
            <person name="Hirao M."/>
            <person name="Ohmori Y."/>
            <person name="Kawabata A."/>
            <person name="Hikiji T."/>
            <person name="Kobatake N."/>
            <person name="Inagaki H."/>
            <person name="Ikema Y."/>
            <person name="Okamoto S."/>
            <person name="Okitani R."/>
            <person name="Kawakami T."/>
            <person name="Noguchi S."/>
            <person name="Itoh T."/>
            <person name="Shigeta K."/>
            <person name="Senba T."/>
            <person name="Matsumura K."/>
            <person name="Nakajima Y."/>
            <person name="Mizuno T."/>
            <person name="Morinaga M."/>
            <person name="Sasaki M."/>
            <person name="Togashi T."/>
            <person name="Oyama M."/>
            <person name="Hata H."/>
            <person name="Watanabe M."/>
            <person name="Komatsu T."/>
            <person name="Mizushima-Sugano J."/>
            <person name="Satoh T."/>
            <person name="Shirai Y."/>
            <person name="Takahashi Y."/>
            <person name="Nakagawa K."/>
            <person name="Okumura K."/>
            <person name="Nagase T."/>
            <person name="Nomura N."/>
            <person name="Kikuchi H."/>
            <person name="Masuho Y."/>
            <person name="Yamashita R."/>
            <person name="Nakai K."/>
            <person name="Yada T."/>
            <person name="Nakamura Y."/>
            <person name="Ohara O."/>
            <person name="Isogai T."/>
            <person name="Sugano S."/>
        </authorList>
    </citation>
    <scope>NUCLEOTIDE SEQUENCE [LARGE SCALE MRNA]</scope>
    <source>
        <tissue>Tongue</tissue>
    </source>
</reference>
<reference key="6">
    <citation type="journal article" date="2001" name="Nature">
        <title>The DNA sequence and comparative analysis of human chromosome 20.</title>
        <authorList>
            <person name="Deloukas P."/>
            <person name="Matthews L.H."/>
            <person name="Ashurst J.L."/>
            <person name="Burton J."/>
            <person name="Gilbert J.G.R."/>
            <person name="Jones M."/>
            <person name="Stavrides G."/>
            <person name="Almeida J.P."/>
            <person name="Babbage A.K."/>
            <person name="Bagguley C.L."/>
            <person name="Bailey J."/>
            <person name="Barlow K.F."/>
            <person name="Bates K.N."/>
            <person name="Beard L.M."/>
            <person name="Beare D.M."/>
            <person name="Beasley O.P."/>
            <person name="Bird C.P."/>
            <person name="Blakey S.E."/>
            <person name="Bridgeman A.M."/>
            <person name="Brown A.J."/>
            <person name="Buck D."/>
            <person name="Burrill W.D."/>
            <person name="Butler A.P."/>
            <person name="Carder C."/>
            <person name="Carter N.P."/>
            <person name="Chapman J.C."/>
            <person name="Clamp M."/>
            <person name="Clark G."/>
            <person name="Clark L.N."/>
            <person name="Clark S.Y."/>
            <person name="Clee C.M."/>
            <person name="Clegg S."/>
            <person name="Cobley V.E."/>
            <person name="Collier R.E."/>
            <person name="Connor R.E."/>
            <person name="Corby N.R."/>
            <person name="Coulson A."/>
            <person name="Coville G.J."/>
            <person name="Deadman R."/>
            <person name="Dhami P.D."/>
            <person name="Dunn M."/>
            <person name="Ellington A.G."/>
            <person name="Frankland J.A."/>
            <person name="Fraser A."/>
            <person name="French L."/>
            <person name="Garner P."/>
            <person name="Grafham D.V."/>
            <person name="Griffiths C."/>
            <person name="Griffiths M.N.D."/>
            <person name="Gwilliam R."/>
            <person name="Hall R.E."/>
            <person name="Hammond S."/>
            <person name="Harley J.L."/>
            <person name="Heath P.D."/>
            <person name="Ho S."/>
            <person name="Holden J.L."/>
            <person name="Howden P.J."/>
            <person name="Huckle E."/>
            <person name="Hunt A.R."/>
            <person name="Hunt S.E."/>
            <person name="Jekosch K."/>
            <person name="Johnson C.M."/>
            <person name="Johnson D."/>
            <person name="Kay M.P."/>
            <person name="Kimberley A.M."/>
            <person name="King A."/>
            <person name="Knights A."/>
            <person name="Laird G.K."/>
            <person name="Lawlor S."/>
            <person name="Lehvaeslaiho M.H."/>
            <person name="Leversha M.A."/>
            <person name="Lloyd C."/>
            <person name="Lloyd D.M."/>
            <person name="Lovell J.D."/>
            <person name="Marsh V.L."/>
            <person name="Martin S.L."/>
            <person name="McConnachie L.J."/>
            <person name="McLay K."/>
            <person name="McMurray A.A."/>
            <person name="Milne S.A."/>
            <person name="Mistry D."/>
            <person name="Moore M.J.F."/>
            <person name="Mullikin J.C."/>
            <person name="Nickerson T."/>
            <person name="Oliver K."/>
            <person name="Parker A."/>
            <person name="Patel R."/>
            <person name="Pearce T.A.V."/>
            <person name="Peck A.I."/>
            <person name="Phillimore B.J.C.T."/>
            <person name="Prathalingam S.R."/>
            <person name="Plumb R.W."/>
            <person name="Ramsay H."/>
            <person name="Rice C.M."/>
            <person name="Ross M.T."/>
            <person name="Scott C.E."/>
            <person name="Sehra H.K."/>
            <person name="Shownkeen R."/>
            <person name="Sims S."/>
            <person name="Skuce C.D."/>
            <person name="Smith M.L."/>
            <person name="Soderlund C."/>
            <person name="Steward C.A."/>
            <person name="Sulston J.E."/>
            <person name="Swann R.M."/>
            <person name="Sycamore N."/>
            <person name="Taylor R."/>
            <person name="Tee L."/>
            <person name="Thomas D.W."/>
            <person name="Thorpe A."/>
            <person name="Tracey A."/>
            <person name="Tromans A.C."/>
            <person name="Vaudin M."/>
            <person name="Wall M."/>
            <person name="Wallis J.M."/>
            <person name="Whitehead S.L."/>
            <person name="Whittaker P."/>
            <person name="Willey D.L."/>
            <person name="Williams L."/>
            <person name="Williams S.A."/>
            <person name="Wilming L."/>
            <person name="Wray P.W."/>
            <person name="Hubbard T."/>
            <person name="Durbin R.M."/>
            <person name="Bentley D.R."/>
            <person name="Beck S."/>
            <person name="Rogers J."/>
        </authorList>
    </citation>
    <scope>NUCLEOTIDE SEQUENCE [LARGE SCALE GENOMIC DNA]</scope>
</reference>
<reference key="7">
    <citation type="submission" date="2005-09" db="EMBL/GenBank/DDBJ databases">
        <authorList>
            <person name="Mural R.J."/>
            <person name="Istrail S."/>
            <person name="Sutton G.G."/>
            <person name="Florea L."/>
            <person name="Halpern A.L."/>
            <person name="Mobarry C.M."/>
            <person name="Lippert R."/>
            <person name="Walenz B."/>
            <person name="Shatkay H."/>
            <person name="Dew I."/>
            <person name="Miller J.R."/>
            <person name="Flanigan M.J."/>
            <person name="Edwards N.J."/>
            <person name="Bolanos R."/>
            <person name="Fasulo D."/>
            <person name="Halldorsson B.V."/>
            <person name="Hannenhalli S."/>
            <person name="Turner R."/>
            <person name="Yooseph S."/>
            <person name="Lu F."/>
            <person name="Nusskern D.R."/>
            <person name="Shue B.C."/>
            <person name="Zheng X.H."/>
            <person name="Zhong F."/>
            <person name="Delcher A.L."/>
            <person name="Huson D.H."/>
            <person name="Kravitz S.A."/>
            <person name="Mouchard L."/>
            <person name="Reinert K."/>
            <person name="Remington K.A."/>
            <person name="Clark A.G."/>
            <person name="Waterman M.S."/>
            <person name="Eichler E.E."/>
            <person name="Adams M.D."/>
            <person name="Hunkapiller M.W."/>
            <person name="Myers E.W."/>
            <person name="Venter J.C."/>
        </authorList>
    </citation>
    <scope>NUCLEOTIDE SEQUENCE [LARGE SCALE GENOMIC DNA]</scope>
</reference>
<reference key="8">
    <citation type="journal article" date="2004" name="Genome Res.">
        <title>The status, quality, and expansion of the NIH full-length cDNA project: the Mammalian Gene Collection (MGC).</title>
        <authorList>
            <consortium name="The MGC Project Team"/>
        </authorList>
    </citation>
    <scope>NUCLEOTIDE SEQUENCE [LARGE SCALE MRNA]</scope>
    <source>
        <tissue>Colon</tissue>
        <tissue>Uterus</tissue>
    </source>
</reference>
<reference key="9">
    <citation type="journal article" date="2006" name="Mol. Cell. Biol.">
        <title>Rab22a regulates the sorting of transferrin to recycling endosomes.</title>
        <authorList>
            <person name="Magadan J.G."/>
            <person name="Barbieri M.A."/>
            <person name="Mesa R."/>
            <person name="Stahl P.D."/>
            <person name="Mayorga L.S."/>
        </authorList>
    </citation>
    <scope>FUNCTION</scope>
    <scope>SUBCELLULAR LOCATION</scope>
    <scope>MUTAGENESIS OF GLN-64</scope>
</reference>
<reference key="10">
    <citation type="journal article" date="2011" name="Biochim. Biophys. Acta">
        <title>Rin-like, a novel regulator of endocytosis, acts as guanine nucleotide exchange factor for Rab5a and Rab22.</title>
        <authorList>
            <person name="Woller B."/>
            <person name="Luiskandl S."/>
            <person name="Popovic M."/>
            <person name="Prieler B.E."/>
            <person name="Ikonge G."/>
            <person name="Mutzl M."/>
            <person name="Rehmann H."/>
            <person name="Herbst R."/>
        </authorList>
    </citation>
    <scope>INTERACTION WITH RINL</scope>
    <scope>MUTAGENESIS OF SER-19 AND GLN-64</scope>
    <scope>SUBCELLULAR LOCATION</scope>
</reference>
<reference key="11">
    <citation type="journal article" date="2011" name="Mol. Biol. Cell">
        <title>Rab22 controls NGF signaling and neurite outgrowth in PC12 cells.</title>
        <authorList>
            <person name="Wang L."/>
            <person name="Liang Z."/>
            <person name="Li G."/>
        </authorList>
    </citation>
    <scope>FUNCTION</scope>
    <scope>INTERACTION WITH RABGEF1</scope>
</reference>
<reference key="12">
    <citation type="journal article" date="2011" name="Traffic">
        <title>Rab GTPases regulating phagosome maturation are differentially recruited to mycobacterial phagosomes.</title>
        <authorList>
            <person name="Seto S."/>
            <person name="Tsujimura K."/>
            <person name="Koide Y."/>
        </authorList>
    </citation>
    <scope>SUBCELLULAR LOCATION</scope>
</reference>
<reference key="13">
    <citation type="journal article" date="2015" name="Proteomics">
        <title>N-terminome analysis of the human mitochondrial proteome.</title>
        <authorList>
            <person name="Vaca Jacome A.S."/>
            <person name="Rabilloud T."/>
            <person name="Schaeffer-Reiss C."/>
            <person name="Rompais M."/>
            <person name="Ayoub D."/>
            <person name="Lane L."/>
            <person name="Bairoch A."/>
            <person name="Van Dorsselaer A."/>
            <person name="Carapito C."/>
        </authorList>
    </citation>
    <scope>IDENTIFICATION BY MASS SPECTROMETRY [LARGE SCALE ANALYSIS]</scope>
</reference>
<dbReference type="EMBL" id="AF125104">
    <property type="protein sequence ID" value="AAL75941.1"/>
    <property type="molecule type" value="mRNA"/>
</dbReference>
<dbReference type="EMBL" id="AF091034">
    <property type="protein sequence ID" value="AAF00047.2"/>
    <property type="molecule type" value="mRNA"/>
</dbReference>
<dbReference type="EMBL" id="AJ276210">
    <property type="protein sequence ID" value="CAC10538.1"/>
    <property type="molecule type" value="mRNA"/>
</dbReference>
<dbReference type="EMBL" id="BT007046">
    <property type="protein sequence ID" value="AAP35695.1"/>
    <property type="molecule type" value="mRNA"/>
</dbReference>
<dbReference type="EMBL" id="AK091180">
    <property type="protein sequence ID" value="BAG52298.1"/>
    <property type="molecule type" value="mRNA"/>
</dbReference>
<dbReference type="EMBL" id="AL035455">
    <property type="status" value="NOT_ANNOTATED_CDS"/>
    <property type="molecule type" value="Genomic_DNA"/>
</dbReference>
<dbReference type="EMBL" id="CH471077">
    <property type="protein sequence ID" value="EAW75496.1"/>
    <property type="molecule type" value="Genomic_DNA"/>
</dbReference>
<dbReference type="EMBL" id="CH471077">
    <property type="protein sequence ID" value="EAW75497.1"/>
    <property type="molecule type" value="Genomic_DNA"/>
</dbReference>
<dbReference type="EMBL" id="BC015710">
    <property type="protein sequence ID" value="AAH15710.1"/>
    <property type="molecule type" value="mRNA"/>
</dbReference>
<dbReference type="EMBL" id="BC063457">
    <property type="protein sequence ID" value="AAH63457.1"/>
    <property type="molecule type" value="mRNA"/>
</dbReference>
<dbReference type="CCDS" id="CCDS33497.1"/>
<dbReference type="RefSeq" id="NP_065724.1">
    <property type="nucleotide sequence ID" value="NM_020673.3"/>
</dbReference>
<dbReference type="SMR" id="Q9UL26"/>
<dbReference type="BioGRID" id="121505">
    <property type="interactions" value="24"/>
</dbReference>
<dbReference type="FunCoup" id="Q9UL26">
    <property type="interactions" value="1518"/>
</dbReference>
<dbReference type="IntAct" id="Q9UL26">
    <property type="interactions" value="12"/>
</dbReference>
<dbReference type="MINT" id="Q9UL26"/>
<dbReference type="STRING" id="9606.ENSP00000244040"/>
<dbReference type="ChEMBL" id="CHEMBL4295981"/>
<dbReference type="iPTMnet" id="Q9UL26"/>
<dbReference type="PhosphoSitePlus" id="Q9UL26"/>
<dbReference type="SwissPalm" id="Q9UL26"/>
<dbReference type="BioMuta" id="RAB22A"/>
<dbReference type="DMDM" id="13633614"/>
<dbReference type="jPOST" id="Q9UL26"/>
<dbReference type="MassIVE" id="Q9UL26"/>
<dbReference type="PaxDb" id="9606-ENSP00000244040"/>
<dbReference type="PeptideAtlas" id="Q9UL26"/>
<dbReference type="ProteomicsDB" id="84935"/>
<dbReference type="Pumba" id="Q9UL26"/>
<dbReference type="Antibodypedia" id="29093">
    <property type="antibodies" value="162 antibodies from 30 providers"/>
</dbReference>
<dbReference type="DNASU" id="57403"/>
<dbReference type="Ensembl" id="ENST00000244040.4">
    <property type="protein sequence ID" value="ENSP00000244040.3"/>
    <property type="gene ID" value="ENSG00000124209.4"/>
</dbReference>
<dbReference type="GeneID" id="57403"/>
<dbReference type="KEGG" id="hsa:57403"/>
<dbReference type="MANE-Select" id="ENST00000244040.4">
    <property type="protein sequence ID" value="ENSP00000244040.3"/>
    <property type="RefSeq nucleotide sequence ID" value="NM_020673.3"/>
    <property type="RefSeq protein sequence ID" value="NP_065724.1"/>
</dbReference>
<dbReference type="UCSC" id="uc002xyz.4">
    <property type="organism name" value="human"/>
</dbReference>
<dbReference type="AGR" id="HGNC:9764"/>
<dbReference type="CTD" id="57403"/>
<dbReference type="DisGeNET" id="57403"/>
<dbReference type="GeneCards" id="RAB22A"/>
<dbReference type="HGNC" id="HGNC:9764">
    <property type="gene designation" value="RAB22A"/>
</dbReference>
<dbReference type="HPA" id="ENSG00000124209">
    <property type="expression patterns" value="Low tissue specificity"/>
</dbReference>
<dbReference type="MIM" id="612966">
    <property type="type" value="gene"/>
</dbReference>
<dbReference type="neXtProt" id="NX_Q9UL26"/>
<dbReference type="OpenTargets" id="ENSG00000124209"/>
<dbReference type="PharmGKB" id="PA34112"/>
<dbReference type="VEuPathDB" id="HostDB:ENSG00000124209"/>
<dbReference type="eggNOG" id="KOG0092">
    <property type="taxonomic scope" value="Eukaryota"/>
</dbReference>
<dbReference type="GeneTree" id="ENSGT00940000157009"/>
<dbReference type="HOGENOM" id="CLU_041217_10_2_1"/>
<dbReference type="InParanoid" id="Q9UL26"/>
<dbReference type="OMA" id="SESHRTC"/>
<dbReference type="OrthoDB" id="63533at2759"/>
<dbReference type="PAN-GO" id="Q9UL26">
    <property type="GO annotations" value="5 GO annotations based on evolutionary models"/>
</dbReference>
<dbReference type="PhylomeDB" id="Q9UL26"/>
<dbReference type="TreeFam" id="TF331262"/>
<dbReference type="PathwayCommons" id="Q9UL26"/>
<dbReference type="Reactome" id="R-HSA-8873719">
    <property type="pathway name" value="RAB geranylgeranylation"/>
</dbReference>
<dbReference type="SignaLink" id="Q9UL26"/>
<dbReference type="SIGNOR" id="Q9UL26"/>
<dbReference type="BioGRID-ORCS" id="57403">
    <property type="hits" value="11 hits in 1154 CRISPR screens"/>
</dbReference>
<dbReference type="ChiTaRS" id="RAB22A">
    <property type="organism name" value="human"/>
</dbReference>
<dbReference type="GeneWiki" id="RAB22A"/>
<dbReference type="GenomeRNAi" id="57403"/>
<dbReference type="Pharos" id="Q9UL26">
    <property type="development level" value="Tbio"/>
</dbReference>
<dbReference type="PRO" id="PR:Q9UL26"/>
<dbReference type="Proteomes" id="UP000005640">
    <property type="component" value="Chromosome 20"/>
</dbReference>
<dbReference type="RNAct" id="Q9UL26">
    <property type="molecule type" value="protein"/>
</dbReference>
<dbReference type="Bgee" id="ENSG00000124209">
    <property type="expression patterns" value="Expressed in middle temporal gyrus and 210 other cell types or tissues"/>
</dbReference>
<dbReference type="GO" id="GO:0015629">
    <property type="term" value="C:actin cytoskeleton"/>
    <property type="evidence" value="ECO:0007669"/>
    <property type="project" value="Ensembl"/>
</dbReference>
<dbReference type="GO" id="GO:0005769">
    <property type="term" value="C:early endosome"/>
    <property type="evidence" value="ECO:0000314"/>
    <property type="project" value="UniProtKB"/>
</dbReference>
<dbReference type="GO" id="GO:0012505">
    <property type="term" value="C:endomembrane system"/>
    <property type="evidence" value="ECO:0000318"/>
    <property type="project" value="GO_Central"/>
</dbReference>
<dbReference type="GO" id="GO:0010008">
    <property type="term" value="C:endosome membrane"/>
    <property type="evidence" value="ECO:0007669"/>
    <property type="project" value="UniProtKB-SubCell"/>
</dbReference>
<dbReference type="GO" id="GO:0070062">
    <property type="term" value="C:extracellular exosome"/>
    <property type="evidence" value="ECO:0007005"/>
    <property type="project" value="UniProtKB"/>
</dbReference>
<dbReference type="GO" id="GO:0005794">
    <property type="term" value="C:Golgi apparatus"/>
    <property type="evidence" value="ECO:0000314"/>
    <property type="project" value="HPA"/>
</dbReference>
<dbReference type="GO" id="GO:0043231">
    <property type="term" value="C:intracellular membrane-bounded organelle"/>
    <property type="evidence" value="ECO:0000314"/>
    <property type="project" value="HPA"/>
</dbReference>
<dbReference type="GO" id="GO:0005770">
    <property type="term" value="C:late endosome"/>
    <property type="evidence" value="ECO:0007669"/>
    <property type="project" value="UniProtKB-SubCell"/>
</dbReference>
<dbReference type="GO" id="GO:0045335">
    <property type="term" value="C:phagocytic vesicle"/>
    <property type="evidence" value="ECO:0000314"/>
    <property type="project" value="UniProtKB"/>
</dbReference>
<dbReference type="GO" id="GO:0030670">
    <property type="term" value="C:phagocytic vesicle membrane"/>
    <property type="evidence" value="ECO:0007669"/>
    <property type="project" value="UniProtKB-SubCell"/>
</dbReference>
<dbReference type="GO" id="GO:0005886">
    <property type="term" value="C:plasma membrane"/>
    <property type="evidence" value="ECO:0000314"/>
    <property type="project" value="UniProtKB"/>
</dbReference>
<dbReference type="GO" id="GO:0001726">
    <property type="term" value="C:ruffle"/>
    <property type="evidence" value="ECO:0007669"/>
    <property type="project" value="UniProtKB-SubCell"/>
</dbReference>
<dbReference type="GO" id="GO:0019003">
    <property type="term" value="F:GDP binding"/>
    <property type="evidence" value="ECO:0000314"/>
    <property type="project" value="UniProtKB"/>
</dbReference>
<dbReference type="GO" id="GO:0005525">
    <property type="term" value="F:GTP binding"/>
    <property type="evidence" value="ECO:0000315"/>
    <property type="project" value="UniProtKB"/>
</dbReference>
<dbReference type="GO" id="GO:0003924">
    <property type="term" value="F:GTPase activity"/>
    <property type="evidence" value="ECO:0000315"/>
    <property type="project" value="UniProtKB"/>
</dbReference>
<dbReference type="GO" id="GO:0006897">
    <property type="term" value="P:endocytosis"/>
    <property type="evidence" value="ECO:0000314"/>
    <property type="project" value="UniProtKB"/>
</dbReference>
<dbReference type="GO" id="GO:0007032">
    <property type="term" value="P:endosome organization"/>
    <property type="evidence" value="ECO:0000270"/>
    <property type="project" value="UniProtKB"/>
</dbReference>
<dbReference type="GO" id="GO:0006886">
    <property type="term" value="P:intracellular protein transport"/>
    <property type="evidence" value="ECO:0000318"/>
    <property type="project" value="GO_Central"/>
</dbReference>
<dbReference type="GO" id="GO:0097494">
    <property type="term" value="P:regulation of vesicle size"/>
    <property type="evidence" value="ECO:0000315"/>
    <property type="project" value="UniProtKB"/>
</dbReference>
<dbReference type="CDD" id="cd01860">
    <property type="entry name" value="Rab5_related"/>
    <property type="match status" value="1"/>
</dbReference>
<dbReference type="FunFam" id="3.40.50.300:FF:000346">
    <property type="entry name" value="RAB31, member RAS oncogene family"/>
    <property type="match status" value="1"/>
</dbReference>
<dbReference type="Gene3D" id="3.40.50.300">
    <property type="entry name" value="P-loop containing nucleotide triphosphate hydrolases"/>
    <property type="match status" value="1"/>
</dbReference>
<dbReference type="InterPro" id="IPR027417">
    <property type="entry name" value="P-loop_NTPase"/>
</dbReference>
<dbReference type="InterPro" id="IPR005225">
    <property type="entry name" value="Small_GTP-bd"/>
</dbReference>
<dbReference type="InterPro" id="IPR001806">
    <property type="entry name" value="Small_GTPase"/>
</dbReference>
<dbReference type="NCBIfam" id="TIGR00231">
    <property type="entry name" value="small_GTP"/>
    <property type="match status" value="1"/>
</dbReference>
<dbReference type="PANTHER" id="PTHR47978">
    <property type="match status" value="1"/>
</dbReference>
<dbReference type="Pfam" id="PF00071">
    <property type="entry name" value="Ras"/>
    <property type="match status" value="1"/>
</dbReference>
<dbReference type="PRINTS" id="PR00449">
    <property type="entry name" value="RASTRNSFRMNG"/>
</dbReference>
<dbReference type="SMART" id="SM00175">
    <property type="entry name" value="RAB"/>
    <property type="match status" value="1"/>
</dbReference>
<dbReference type="SMART" id="SM00176">
    <property type="entry name" value="RAN"/>
    <property type="match status" value="1"/>
</dbReference>
<dbReference type="SMART" id="SM00173">
    <property type="entry name" value="RAS"/>
    <property type="match status" value="1"/>
</dbReference>
<dbReference type="SMART" id="SM00174">
    <property type="entry name" value="RHO"/>
    <property type="match status" value="1"/>
</dbReference>
<dbReference type="SUPFAM" id="SSF52540">
    <property type="entry name" value="P-loop containing nucleoside triphosphate hydrolases"/>
    <property type="match status" value="1"/>
</dbReference>
<dbReference type="PROSITE" id="PS51419">
    <property type="entry name" value="RAB"/>
    <property type="match status" value="1"/>
</dbReference>
<feature type="chain" id="PRO_0000121209" description="Ras-related protein Rab-22A">
    <location>
        <begin position="1"/>
        <end position="194"/>
    </location>
</feature>
<feature type="region of interest" description="Disordered" evidence="4">
    <location>
        <begin position="174"/>
        <end position="194"/>
    </location>
</feature>
<feature type="short sequence motif" description="Effector region" evidence="1">
    <location>
        <begin position="34"/>
        <end position="42"/>
    </location>
</feature>
<feature type="compositionally biased region" description="Basic and acidic residues" evidence="4">
    <location>
        <begin position="185"/>
        <end position="194"/>
    </location>
</feature>
<feature type="binding site" evidence="1">
    <location>
        <begin position="12"/>
        <end position="20"/>
    </location>
    <ligand>
        <name>GTP</name>
        <dbReference type="ChEBI" id="CHEBI:37565"/>
    </ligand>
</feature>
<feature type="binding site" evidence="1">
    <location>
        <begin position="60"/>
        <end position="64"/>
    </location>
    <ligand>
        <name>GTP</name>
        <dbReference type="ChEBI" id="CHEBI:37565"/>
    </ligand>
</feature>
<feature type="binding site" evidence="1">
    <location>
        <begin position="118"/>
        <end position="121"/>
    </location>
    <ligand>
        <name>GTP</name>
        <dbReference type="ChEBI" id="CHEBI:37565"/>
    </ligand>
</feature>
<feature type="binding site" evidence="1">
    <location>
        <begin position="148"/>
        <end position="150"/>
    </location>
    <ligand>
        <name>GTP</name>
        <dbReference type="ChEBI" id="CHEBI:37565"/>
    </ligand>
</feature>
<feature type="lipid moiety-binding region" description="S-geranylgeranyl cysteine" evidence="1">
    <location>
        <position position="193"/>
    </location>
</feature>
<feature type="lipid moiety-binding region" description="S-geranylgeranyl cysteine" evidence="1">
    <location>
        <position position="194"/>
    </location>
</feature>
<feature type="mutagenesis site" description="Loss of GTPase activity." evidence="7">
    <original>S</original>
    <variation>L</variation>
    <location>
        <position position="19"/>
    </location>
</feature>
<feature type="mutagenesis site" description="Constitutive GTPase activity. Impairs normal protein trafficking through early endosomes." evidence="5 7">
    <original>Q</original>
    <variation>L</variation>
    <location>
        <position position="64"/>
    </location>
</feature>
<feature type="sequence conflict" description="In Ref. 3; CAC10538." evidence="9" ref="3">
    <original>R</original>
    <variation>K</variation>
    <location>
        <position position="184"/>
    </location>
</feature>
<feature type="sequence conflict" description="In Ref. 1; AAL75941." evidence="9" ref="1">
    <original>SC</original>
    <variation>TA</variation>
    <location>
        <begin position="192"/>
        <end position="193"/>
    </location>
</feature>
<name>RB22A_HUMAN</name>
<gene>
    <name type="primary">RAB22A</name>
    <name type="synonym">RAB22</name>
</gene>
<accession>Q9UL26</accession>
<accession>B3KR86</accession>
<accession>E1P605</accession>
<accession>Q8TF12</accession>
<accession>Q9H4E6</accession>